<evidence type="ECO:0000255" key="1">
    <source>
        <dbReference type="HAMAP-Rule" id="MF_00435"/>
    </source>
</evidence>
<evidence type="ECO:0000255" key="2">
    <source>
        <dbReference type="PROSITE-ProRule" id="PRU01197"/>
    </source>
</evidence>
<evidence type="ECO:0000255" key="3">
    <source>
        <dbReference type="PROSITE-ProRule" id="PRU01198"/>
    </source>
</evidence>
<organism>
    <name type="scientific">Bacillus thuringiensis subsp. konkukian (strain 97-27)</name>
    <dbReference type="NCBI Taxonomy" id="281309"/>
    <lineage>
        <taxon>Bacteria</taxon>
        <taxon>Bacillati</taxon>
        <taxon>Bacillota</taxon>
        <taxon>Bacilli</taxon>
        <taxon>Bacillales</taxon>
        <taxon>Bacillaceae</taxon>
        <taxon>Bacillus</taxon>
        <taxon>Bacillus cereus group</taxon>
    </lineage>
</organism>
<keyword id="KW-0028">Amino-acid biosynthesis</keyword>
<keyword id="KW-0100">Branched-chain amino acid biosynthesis</keyword>
<keyword id="KW-0460">Magnesium</keyword>
<keyword id="KW-0479">Metal-binding</keyword>
<keyword id="KW-0521">NADP</keyword>
<keyword id="KW-0560">Oxidoreductase</keyword>
<accession>Q6HLF4</accession>
<dbReference type="EC" id="1.1.1.86" evidence="1"/>
<dbReference type="EMBL" id="AE017355">
    <property type="protein sequence ID" value="AAT62183.1"/>
    <property type="molecule type" value="Genomic_DNA"/>
</dbReference>
<dbReference type="RefSeq" id="YP_035617.1">
    <property type="nucleotide sequence ID" value="NC_005957.1"/>
</dbReference>
<dbReference type="SMR" id="Q6HLF4"/>
<dbReference type="KEGG" id="btk:BT9727_1283"/>
<dbReference type="PATRIC" id="fig|281309.8.peg.1352"/>
<dbReference type="HOGENOM" id="CLU_033821_0_1_9"/>
<dbReference type="UniPathway" id="UPA00047">
    <property type="reaction ID" value="UER00056"/>
</dbReference>
<dbReference type="UniPathway" id="UPA00049">
    <property type="reaction ID" value="UER00060"/>
</dbReference>
<dbReference type="Proteomes" id="UP000001301">
    <property type="component" value="Chromosome"/>
</dbReference>
<dbReference type="GO" id="GO:0005829">
    <property type="term" value="C:cytosol"/>
    <property type="evidence" value="ECO:0007669"/>
    <property type="project" value="TreeGrafter"/>
</dbReference>
<dbReference type="GO" id="GO:0004455">
    <property type="term" value="F:ketol-acid reductoisomerase activity"/>
    <property type="evidence" value="ECO:0007669"/>
    <property type="project" value="UniProtKB-UniRule"/>
</dbReference>
<dbReference type="GO" id="GO:0000287">
    <property type="term" value="F:magnesium ion binding"/>
    <property type="evidence" value="ECO:0007669"/>
    <property type="project" value="UniProtKB-UniRule"/>
</dbReference>
<dbReference type="GO" id="GO:0050661">
    <property type="term" value="F:NADP binding"/>
    <property type="evidence" value="ECO:0007669"/>
    <property type="project" value="InterPro"/>
</dbReference>
<dbReference type="GO" id="GO:0009097">
    <property type="term" value="P:isoleucine biosynthetic process"/>
    <property type="evidence" value="ECO:0007669"/>
    <property type="project" value="UniProtKB-UniRule"/>
</dbReference>
<dbReference type="GO" id="GO:0009099">
    <property type="term" value="P:L-valine biosynthetic process"/>
    <property type="evidence" value="ECO:0007669"/>
    <property type="project" value="UniProtKB-UniRule"/>
</dbReference>
<dbReference type="FunFam" id="3.40.50.720:FF:000023">
    <property type="entry name" value="Ketol-acid reductoisomerase (NADP(+))"/>
    <property type="match status" value="1"/>
</dbReference>
<dbReference type="Gene3D" id="6.10.240.10">
    <property type="match status" value="1"/>
</dbReference>
<dbReference type="Gene3D" id="3.40.50.720">
    <property type="entry name" value="NAD(P)-binding Rossmann-like Domain"/>
    <property type="match status" value="1"/>
</dbReference>
<dbReference type="HAMAP" id="MF_00435">
    <property type="entry name" value="IlvC"/>
    <property type="match status" value="1"/>
</dbReference>
<dbReference type="InterPro" id="IPR008927">
    <property type="entry name" value="6-PGluconate_DH-like_C_sf"/>
</dbReference>
<dbReference type="InterPro" id="IPR013023">
    <property type="entry name" value="KARI"/>
</dbReference>
<dbReference type="InterPro" id="IPR000506">
    <property type="entry name" value="KARI_C"/>
</dbReference>
<dbReference type="InterPro" id="IPR013116">
    <property type="entry name" value="KARI_N"/>
</dbReference>
<dbReference type="InterPro" id="IPR014359">
    <property type="entry name" value="KARI_prok"/>
</dbReference>
<dbReference type="InterPro" id="IPR036291">
    <property type="entry name" value="NAD(P)-bd_dom_sf"/>
</dbReference>
<dbReference type="NCBIfam" id="TIGR00465">
    <property type="entry name" value="ilvC"/>
    <property type="match status" value="1"/>
</dbReference>
<dbReference type="NCBIfam" id="NF004017">
    <property type="entry name" value="PRK05479.1"/>
    <property type="match status" value="1"/>
</dbReference>
<dbReference type="NCBIfam" id="NF009940">
    <property type="entry name" value="PRK13403.1"/>
    <property type="match status" value="1"/>
</dbReference>
<dbReference type="PANTHER" id="PTHR21371">
    <property type="entry name" value="KETOL-ACID REDUCTOISOMERASE, MITOCHONDRIAL"/>
    <property type="match status" value="1"/>
</dbReference>
<dbReference type="PANTHER" id="PTHR21371:SF1">
    <property type="entry name" value="KETOL-ACID REDUCTOISOMERASE, MITOCHONDRIAL"/>
    <property type="match status" value="1"/>
</dbReference>
<dbReference type="Pfam" id="PF01450">
    <property type="entry name" value="KARI_C"/>
    <property type="match status" value="1"/>
</dbReference>
<dbReference type="Pfam" id="PF07991">
    <property type="entry name" value="KARI_N"/>
    <property type="match status" value="1"/>
</dbReference>
<dbReference type="PIRSF" id="PIRSF000116">
    <property type="entry name" value="IlvC_gammaproteo"/>
    <property type="match status" value="1"/>
</dbReference>
<dbReference type="SUPFAM" id="SSF48179">
    <property type="entry name" value="6-phosphogluconate dehydrogenase C-terminal domain-like"/>
    <property type="match status" value="1"/>
</dbReference>
<dbReference type="SUPFAM" id="SSF51735">
    <property type="entry name" value="NAD(P)-binding Rossmann-fold domains"/>
    <property type="match status" value="1"/>
</dbReference>
<dbReference type="PROSITE" id="PS51851">
    <property type="entry name" value="KARI_C"/>
    <property type="match status" value="1"/>
</dbReference>
<dbReference type="PROSITE" id="PS51850">
    <property type="entry name" value="KARI_N"/>
    <property type="match status" value="1"/>
</dbReference>
<sequence>MAKVYYEKDVTVNVLKEKKVAIIGYGSQGHAHAQNLRDNGFDVVVGLRKGKSWDKAKEDGFSVYTVAEAAKKADVVMILLPDELQPEVYEAEIAPNLQAGNSLVFAHGFNVHFDQVKPPVNVDVFLVAPKGPGHLVRRTFVEGGAVPALFAVYQDATGVATEKALSYADGIGATRAGVLETTFKEETETDLFGEQAVLCGGVTALVKAGFETLVDAGYQPELAYFECLHELKLIVDLMYEGGLENMRYSVSDTAQWGDFVSGPRVVTEDTKKAMDTVLAEIQDGTFARGWIAEHKAGRPNFHATNEKENEHEIEVVGRKLREMMPFVQPRVKAGVK</sequence>
<gene>
    <name evidence="1" type="primary">ilvC1</name>
    <name type="ordered locus">BT9727_1283</name>
</gene>
<proteinExistence type="inferred from homology"/>
<name>ILVC1_BACHK</name>
<comment type="function">
    <text evidence="1">Involved in the biosynthesis of branched-chain amino acids (BCAA). Catalyzes an alkyl-migration followed by a ketol-acid reduction of (S)-2-acetolactate (S2AL) to yield (R)-2,3-dihydroxy-isovalerate. In the isomerase reaction, S2AL is rearranged via a Mg-dependent methyl migration to produce 3-hydroxy-3-methyl-2-ketobutyrate (HMKB). In the reductase reaction, this 2-ketoacid undergoes a metal-dependent reduction by NADPH to yield (R)-2,3-dihydroxy-isovalerate.</text>
</comment>
<comment type="catalytic activity">
    <reaction evidence="1">
        <text>(2R)-2,3-dihydroxy-3-methylbutanoate + NADP(+) = (2S)-2-acetolactate + NADPH + H(+)</text>
        <dbReference type="Rhea" id="RHEA:22068"/>
        <dbReference type="ChEBI" id="CHEBI:15378"/>
        <dbReference type="ChEBI" id="CHEBI:49072"/>
        <dbReference type="ChEBI" id="CHEBI:57783"/>
        <dbReference type="ChEBI" id="CHEBI:58349"/>
        <dbReference type="ChEBI" id="CHEBI:58476"/>
        <dbReference type="EC" id="1.1.1.86"/>
    </reaction>
</comment>
<comment type="catalytic activity">
    <reaction evidence="1">
        <text>(2R,3R)-2,3-dihydroxy-3-methylpentanoate + NADP(+) = (S)-2-ethyl-2-hydroxy-3-oxobutanoate + NADPH + H(+)</text>
        <dbReference type="Rhea" id="RHEA:13493"/>
        <dbReference type="ChEBI" id="CHEBI:15378"/>
        <dbReference type="ChEBI" id="CHEBI:49256"/>
        <dbReference type="ChEBI" id="CHEBI:49258"/>
        <dbReference type="ChEBI" id="CHEBI:57783"/>
        <dbReference type="ChEBI" id="CHEBI:58349"/>
        <dbReference type="EC" id="1.1.1.86"/>
    </reaction>
</comment>
<comment type="cofactor">
    <cofactor evidence="1">
        <name>Mg(2+)</name>
        <dbReference type="ChEBI" id="CHEBI:18420"/>
    </cofactor>
    <text evidence="1">Binds 2 magnesium ions per subunit.</text>
</comment>
<comment type="pathway">
    <text evidence="1">Amino-acid biosynthesis; L-isoleucine biosynthesis; L-isoleucine from 2-oxobutanoate: step 2/4.</text>
</comment>
<comment type="pathway">
    <text evidence="1">Amino-acid biosynthesis; L-valine biosynthesis; L-valine from pyruvate: step 2/4.</text>
</comment>
<comment type="similarity">
    <text evidence="1">Belongs to the ketol-acid reductoisomerase family.</text>
</comment>
<reference key="1">
    <citation type="journal article" date="2006" name="J. Bacteriol.">
        <title>Pathogenomic sequence analysis of Bacillus cereus and Bacillus thuringiensis isolates closely related to Bacillus anthracis.</title>
        <authorList>
            <person name="Han C.S."/>
            <person name="Xie G."/>
            <person name="Challacombe J.F."/>
            <person name="Altherr M.R."/>
            <person name="Bhotika S.S."/>
            <person name="Bruce D."/>
            <person name="Campbell C.S."/>
            <person name="Campbell M.L."/>
            <person name="Chen J."/>
            <person name="Chertkov O."/>
            <person name="Cleland C."/>
            <person name="Dimitrijevic M."/>
            <person name="Doggett N.A."/>
            <person name="Fawcett J.J."/>
            <person name="Glavina T."/>
            <person name="Goodwin L.A."/>
            <person name="Hill K.K."/>
            <person name="Hitchcock P."/>
            <person name="Jackson P.J."/>
            <person name="Keim P."/>
            <person name="Kewalramani A.R."/>
            <person name="Longmire J."/>
            <person name="Lucas S."/>
            <person name="Malfatti S."/>
            <person name="McMurry K."/>
            <person name="Meincke L.J."/>
            <person name="Misra M."/>
            <person name="Moseman B.L."/>
            <person name="Mundt M."/>
            <person name="Munk A.C."/>
            <person name="Okinaka R.T."/>
            <person name="Parson-Quintana B."/>
            <person name="Reilly L.P."/>
            <person name="Richardson P."/>
            <person name="Robinson D.L."/>
            <person name="Rubin E."/>
            <person name="Saunders E."/>
            <person name="Tapia R."/>
            <person name="Tesmer J.G."/>
            <person name="Thayer N."/>
            <person name="Thompson L.S."/>
            <person name="Tice H."/>
            <person name="Ticknor L.O."/>
            <person name="Wills P.L."/>
            <person name="Brettin T.S."/>
            <person name="Gilna P."/>
        </authorList>
    </citation>
    <scope>NUCLEOTIDE SEQUENCE [LARGE SCALE GENOMIC DNA]</scope>
    <source>
        <strain>97-27</strain>
    </source>
</reference>
<protein>
    <recommendedName>
        <fullName evidence="1">Ketol-acid reductoisomerase (NADP(+)) 1</fullName>
        <shortName evidence="1">KARI 1</shortName>
        <ecNumber evidence="1">1.1.1.86</ecNumber>
    </recommendedName>
    <alternativeName>
        <fullName evidence="1">Acetohydroxy-acid isomeroreductase 1</fullName>
        <shortName evidence="1">AHIR 1</shortName>
    </alternativeName>
    <alternativeName>
        <fullName evidence="1">Alpha-keto-beta-hydroxylacyl reductoisomerase 1</fullName>
    </alternativeName>
    <alternativeName>
        <fullName evidence="1">Ketol-acid reductoisomerase type 1</fullName>
    </alternativeName>
    <alternativeName>
        <fullName evidence="1">Ketol-acid reductoisomerase type I</fullName>
    </alternativeName>
</protein>
<feature type="chain" id="PRO_0000226159" description="Ketol-acid reductoisomerase (NADP(+)) 1">
    <location>
        <begin position="1"/>
        <end position="336"/>
    </location>
</feature>
<feature type="domain" description="KARI N-terminal Rossmann" evidence="2">
    <location>
        <begin position="2"/>
        <end position="181"/>
    </location>
</feature>
<feature type="domain" description="KARI C-terminal knotted" evidence="3">
    <location>
        <begin position="182"/>
        <end position="327"/>
    </location>
</feature>
<feature type="active site" evidence="1">
    <location>
        <position position="107"/>
    </location>
</feature>
<feature type="binding site" evidence="1">
    <location>
        <begin position="25"/>
        <end position="28"/>
    </location>
    <ligand>
        <name>NADP(+)</name>
        <dbReference type="ChEBI" id="CHEBI:58349"/>
    </ligand>
</feature>
<feature type="binding site" evidence="1">
    <location>
        <position position="48"/>
    </location>
    <ligand>
        <name>NADP(+)</name>
        <dbReference type="ChEBI" id="CHEBI:58349"/>
    </ligand>
</feature>
<feature type="binding site" evidence="1">
    <location>
        <position position="52"/>
    </location>
    <ligand>
        <name>NADP(+)</name>
        <dbReference type="ChEBI" id="CHEBI:58349"/>
    </ligand>
</feature>
<feature type="binding site" evidence="1">
    <location>
        <begin position="82"/>
        <end position="85"/>
    </location>
    <ligand>
        <name>NADP(+)</name>
        <dbReference type="ChEBI" id="CHEBI:58349"/>
    </ligand>
</feature>
<feature type="binding site" evidence="1">
    <location>
        <position position="133"/>
    </location>
    <ligand>
        <name>NADP(+)</name>
        <dbReference type="ChEBI" id="CHEBI:58349"/>
    </ligand>
</feature>
<feature type="binding site" evidence="1">
    <location>
        <position position="190"/>
    </location>
    <ligand>
        <name>Mg(2+)</name>
        <dbReference type="ChEBI" id="CHEBI:18420"/>
        <label>1</label>
    </ligand>
</feature>
<feature type="binding site" evidence="1">
    <location>
        <position position="190"/>
    </location>
    <ligand>
        <name>Mg(2+)</name>
        <dbReference type="ChEBI" id="CHEBI:18420"/>
        <label>2</label>
    </ligand>
</feature>
<feature type="binding site" evidence="1">
    <location>
        <position position="194"/>
    </location>
    <ligand>
        <name>Mg(2+)</name>
        <dbReference type="ChEBI" id="CHEBI:18420"/>
        <label>1</label>
    </ligand>
</feature>
<feature type="binding site" evidence="1">
    <location>
        <position position="226"/>
    </location>
    <ligand>
        <name>Mg(2+)</name>
        <dbReference type="ChEBI" id="CHEBI:18420"/>
        <label>2</label>
    </ligand>
</feature>
<feature type="binding site" evidence="1">
    <location>
        <position position="230"/>
    </location>
    <ligand>
        <name>Mg(2+)</name>
        <dbReference type="ChEBI" id="CHEBI:18420"/>
        <label>2</label>
    </ligand>
</feature>
<feature type="binding site" evidence="1">
    <location>
        <position position="251"/>
    </location>
    <ligand>
        <name>substrate</name>
    </ligand>
</feature>